<gene>
    <name evidence="1" type="primary">coq7</name>
    <name type="ordered locus">BMASAVP1_A0482</name>
</gene>
<feature type="chain" id="PRO_0000338669" description="3-demethoxyubiquinol 3-hydroxylase">
    <location>
        <begin position="1"/>
        <end position="208"/>
    </location>
</feature>
<feature type="binding site" evidence="1">
    <location>
        <position position="57"/>
    </location>
    <ligand>
        <name>Fe cation</name>
        <dbReference type="ChEBI" id="CHEBI:24875"/>
        <label>1</label>
    </ligand>
</feature>
<feature type="binding site" evidence="1">
    <location>
        <position position="87"/>
    </location>
    <ligand>
        <name>Fe cation</name>
        <dbReference type="ChEBI" id="CHEBI:24875"/>
        <label>1</label>
    </ligand>
</feature>
<feature type="binding site" evidence="1">
    <location>
        <position position="87"/>
    </location>
    <ligand>
        <name>Fe cation</name>
        <dbReference type="ChEBI" id="CHEBI:24875"/>
        <label>2</label>
    </ligand>
</feature>
<feature type="binding site" evidence="1">
    <location>
        <position position="90"/>
    </location>
    <ligand>
        <name>Fe cation</name>
        <dbReference type="ChEBI" id="CHEBI:24875"/>
        <label>1</label>
    </ligand>
</feature>
<feature type="binding site" evidence="1">
    <location>
        <position position="139"/>
    </location>
    <ligand>
        <name>Fe cation</name>
        <dbReference type="ChEBI" id="CHEBI:24875"/>
        <label>2</label>
    </ligand>
</feature>
<feature type="binding site" evidence="1">
    <location>
        <position position="171"/>
    </location>
    <ligand>
        <name>Fe cation</name>
        <dbReference type="ChEBI" id="CHEBI:24875"/>
        <label>1</label>
    </ligand>
</feature>
<feature type="binding site" evidence="1">
    <location>
        <position position="171"/>
    </location>
    <ligand>
        <name>Fe cation</name>
        <dbReference type="ChEBI" id="CHEBI:24875"/>
        <label>2</label>
    </ligand>
</feature>
<feature type="binding site" evidence="1">
    <location>
        <position position="174"/>
    </location>
    <ligand>
        <name>Fe cation</name>
        <dbReference type="ChEBI" id="CHEBI:24875"/>
        <label>2</label>
    </ligand>
</feature>
<accession>A1V0S8</accession>
<name>COQ7_BURMS</name>
<comment type="function">
    <text evidence="1">Catalyzes the hydroxylation of 2-nonaprenyl-3-methyl-6-methoxy-1,4-benzoquinol during ubiquinone biosynthesis.</text>
</comment>
<comment type="catalytic activity">
    <reaction evidence="1">
        <text>a 5-methoxy-2-methyl-3-(all-trans-polyprenyl)benzene-1,4-diol + AH2 + O2 = a 3-demethylubiquinol + A + H2O</text>
        <dbReference type="Rhea" id="RHEA:50908"/>
        <dbReference type="Rhea" id="RHEA-COMP:10859"/>
        <dbReference type="Rhea" id="RHEA-COMP:10914"/>
        <dbReference type="ChEBI" id="CHEBI:13193"/>
        <dbReference type="ChEBI" id="CHEBI:15377"/>
        <dbReference type="ChEBI" id="CHEBI:15379"/>
        <dbReference type="ChEBI" id="CHEBI:17499"/>
        <dbReference type="ChEBI" id="CHEBI:84167"/>
        <dbReference type="ChEBI" id="CHEBI:84422"/>
        <dbReference type="EC" id="1.14.99.60"/>
    </reaction>
</comment>
<comment type="cofactor">
    <cofactor evidence="1">
        <name>Fe cation</name>
        <dbReference type="ChEBI" id="CHEBI:24875"/>
    </cofactor>
    <text evidence="1">Binds 2 iron ions per subunit.</text>
</comment>
<comment type="pathway">
    <text evidence="1">Cofactor biosynthesis; ubiquinone biosynthesis.</text>
</comment>
<comment type="subcellular location">
    <subcellularLocation>
        <location evidence="1">Cell membrane</location>
        <topology evidence="1">Peripheral membrane protein</topology>
    </subcellularLocation>
</comment>
<comment type="similarity">
    <text evidence="1">Belongs to the COQ7 family.</text>
</comment>
<comment type="sequence caution" evidence="2">
    <conflict type="erroneous initiation">
        <sequence resource="EMBL-CDS" id="ABM51985"/>
    </conflict>
</comment>
<protein>
    <recommendedName>
        <fullName evidence="1">3-demethoxyubiquinol 3-hydroxylase</fullName>
        <shortName evidence="1">DMQ hydroxylase</shortName>
        <ecNumber evidence="1">1.14.99.60</ecNumber>
    </recommendedName>
    <alternativeName>
        <fullName evidence="1">2-nonaprenyl-3-methyl-6-methoxy-1,4-benzoquinol hydroxylase</fullName>
    </alternativeName>
</protein>
<evidence type="ECO:0000255" key="1">
    <source>
        <dbReference type="HAMAP-Rule" id="MF_01658"/>
    </source>
</evidence>
<evidence type="ECO:0000305" key="2"/>
<organism>
    <name type="scientific">Burkholderia mallei (strain SAVP1)</name>
    <dbReference type="NCBI Taxonomy" id="320388"/>
    <lineage>
        <taxon>Bacteria</taxon>
        <taxon>Pseudomonadati</taxon>
        <taxon>Pseudomonadota</taxon>
        <taxon>Betaproteobacteria</taxon>
        <taxon>Burkholderiales</taxon>
        <taxon>Burkholderiaceae</taxon>
        <taxon>Burkholderia</taxon>
        <taxon>pseudomallei group</taxon>
    </lineage>
</organism>
<reference key="1">
    <citation type="journal article" date="2010" name="Genome Biol. Evol.">
        <title>Continuing evolution of Burkholderia mallei through genome reduction and large-scale rearrangements.</title>
        <authorList>
            <person name="Losada L."/>
            <person name="Ronning C.M."/>
            <person name="DeShazer D."/>
            <person name="Woods D."/>
            <person name="Fedorova N."/>
            <person name="Kim H.S."/>
            <person name="Shabalina S.A."/>
            <person name="Pearson T.R."/>
            <person name="Brinkac L."/>
            <person name="Tan P."/>
            <person name="Nandi T."/>
            <person name="Crabtree J."/>
            <person name="Badger J."/>
            <person name="Beckstrom-Sternberg S."/>
            <person name="Saqib M."/>
            <person name="Schutzer S.E."/>
            <person name="Keim P."/>
            <person name="Nierman W.C."/>
        </authorList>
    </citation>
    <scope>NUCLEOTIDE SEQUENCE [LARGE SCALE GENOMIC DNA]</scope>
    <source>
        <strain>SAVP1</strain>
    </source>
</reference>
<proteinExistence type="inferred from homology"/>
<keyword id="KW-1003">Cell membrane</keyword>
<keyword id="KW-0408">Iron</keyword>
<keyword id="KW-0472">Membrane</keyword>
<keyword id="KW-0479">Metal-binding</keyword>
<keyword id="KW-0503">Monooxygenase</keyword>
<keyword id="KW-0560">Oxidoreductase</keyword>
<keyword id="KW-0831">Ubiquinone biosynthesis</keyword>
<sequence>MVFDELITEFDRGLRSIAGVSRMSRPVPKPAAAAPAELSAAERKHAAGLMRVNHVGEVCAQALYQAQKLTTSSAGLKEMFEHAAREEEDHLAWTAHRLKDLDSRPSLLNPLWYAGALAIGVVAGRLGDKVSLGFMAETERQVESHLDGHLSELPAADAESRAIVEQMRADEVKHGKSATDAGGIELPMPARMLMRAASKVMTSTAYYL</sequence>
<dbReference type="EC" id="1.14.99.60" evidence="1"/>
<dbReference type="EMBL" id="CP000526">
    <property type="protein sequence ID" value="ABM51985.1"/>
    <property type="status" value="ALT_INIT"/>
    <property type="molecule type" value="Genomic_DNA"/>
</dbReference>
<dbReference type="RefSeq" id="WP_004194286.1">
    <property type="nucleotide sequence ID" value="NC_008785.1"/>
</dbReference>
<dbReference type="SMR" id="A1V0S8"/>
<dbReference type="GeneID" id="92980253"/>
<dbReference type="KEGG" id="bmv:BMASAVP1_A0482"/>
<dbReference type="HOGENOM" id="CLU_088601_0_0_4"/>
<dbReference type="UniPathway" id="UPA00232"/>
<dbReference type="GO" id="GO:0005886">
    <property type="term" value="C:plasma membrane"/>
    <property type="evidence" value="ECO:0007669"/>
    <property type="project" value="UniProtKB-SubCell"/>
</dbReference>
<dbReference type="GO" id="GO:0008682">
    <property type="term" value="F:3-demethoxyubiquinol 3-hydroxylase activity"/>
    <property type="evidence" value="ECO:0007669"/>
    <property type="project" value="UniProtKB-EC"/>
</dbReference>
<dbReference type="GO" id="GO:0046872">
    <property type="term" value="F:metal ion binding"/>
    <property type="evidence" value="ECO:0007669"/>
    <property type="project" value="UniProtKB-KW"/>
</dbReference>
<dbReference type="GO" id="GO:0006744">
    <property type="term" value="P:ubiquinone biosynthetic process"/>
    <property type="evidence" value="ECO:0007669"/>
    <property type="project" value="UniProtKB-UniRule"/>
</dbReference>
<dbReference type="CDD" id="cd01042">
    <property type="entry name" value="DMQH"/>
    <property type="match status" value="1"/>
</dbReference>
<dbReference type="Gene3D" id="1.20.1260.10">
    <property type="match status" value="1"/>
</dbReference>
<dbReference type="HAMAP" id="MF_01658">
    <property type="entry name" value="COQ7"/>
    <property type="match status" value="1"/>
</dbReference>
<dbReference type="InterPro" id="IPR047809">
    <property type="entry name" value="COQ7_proteobact"/>
</dbReference>
<dbReference type="InterPro" id="IPR012347">
    <property type="entry name" value="Ferritin-like"/>
</dbReference>
<dbReference type="InterPro" id="IPR009078">
    <property type="entry name" value="Ferritin-like_SF"/>
</dbReference>
<dbReference type="InterPro" id="IPR011566">
    <property type="entry name" value="Ubq_synth_Coq7"/>
</dbReference>
<dbReference type="NCBIfam" id="NF033656">
    <property type="entry name" value="DMQ_monoox_COQ7"/>
    <property type="match status" value="1"/>
</dbReference>
<dbReference type="PANTHER" id="PTHR11237:SF4">
    <property type="entry name" value="5-DEMETHOXYUBIQUINONE HYDROXYLASE, MITOCHONDRIAL"/>
    <property type="match status" value="1"/>
</dbReference>
<dbReference type="PANTHER" id="PTHR11237">
    <property type="entry name" value="COENZYME Q10 BIOSYNTHESIS PROTEIN 7"/>
    <property type="match status" value="1"/>
</dbReference>
<dbReference type="Pfam" id="PF03232">
    <property type="entry name" value="COQ7"/>
    <property type="match status" value="1"/>
</dbReference>
<dbReference type="SUPFAM" id="SSF47240">
    <property type="entry name" value="Ferritin-like"/>
    <property type="match status" value="1"/>
</dbReference>